<sequence length="562" mass="61582">MCLSALILVSLAAFTAGAGHPSSPPMVDTVQGKVLGKYISLEGFTQPVAVFLGVPFAKPPLGSLRFAPPQPAEPWSSVKNATSYPPMCFQDPVTGQIVNDLLTNRKEKIPLQFSEDCLYLNIYTPADLTKSDRLPVMVWIHGGGLVLGGASTYDGLVLSTHENVVVVVIQYRLGIWGFFSTGDEHSRGNWGHLDQVAALHWVQDNIAKFGGDPGSVTIFGESAGGESVSVLVLSPLAKNLFQRAISESGVALTAGLVKKNTRPLAEKIAVISGCKNTTSAAMVHCLRQKTEEELLGTTLKLNLFKLDLHGDSRQSHPFVPTVLDGVLLPKMPEEILAEKNFNTVPYIVGINKQEFGWILPTMMNYPPSDVKLDQMTAMSLLKKSSFLLNLPEDAIAVAIEKYLRDKDYTGRNKDQLLELIGDVVFGVPSVIVSRGHRDAGAPTYMYEFQYSPSFSSEMKPDTVVGDHGDEIYSVFGAPILRGGTSEEEINLSKMMMKFWANFARNGNPNGQGLPHWPEYDQKEGYLQIGATTQQAQKLKEKEVAFWTELLAKKQLPTEHTEL</sequence>
<dbReference type="EC" id="3.1.1.1" evidence="5"/>
<dbReference type="EMBL" id="S80191">
    <property type="protein sequence ID" value="AAB21335.1"/>
    <property type="molecule type" value="mRNA"/>
</dbReference>
<dbReference type="EMBL" id="BC019208">
    <property type="protein sequence ID" value="AAH19208.1"/>
    <property type="molecule type" value="mRNA"/>
</dbReference>
<dbReference type="CCDS" id="CCDS22529.1"/>
<dbReference type="PIR" id="A55281">
    <property type="entry name" value="A55281"/>
</dbReference>
<dbReference type="RefSeq" id="NP_598421.1">
    <property type="nucleotide sequence ID" value="NM_133660.4"/>
</dbReference>
<dbReference type="SMR" id="Q64176"/>
<dbReference type="CORUM" id="Q64176"/>
<dbReference type="FunCoup" id="Q64176">
    <property type="interactions" value="423"/>
</dbReference>
<dbReference type="IntAct" id="Q64176">
    <property type="interactions" value="1"/>
</dbReference>
<dbReference type="STRING" id="10090.ENSMUSP00000034173"/>
<dbReference type="ESTHER" id="mouse-Ces1e">
    <property type="family name" value="Carb_B_Chordata"/>
</dbReference>
<dbReference type="GlyCosmos" id="Q64176">
    <property type="glycosylation" value="3 sites, No reported glycans"/>
</dbReference>
<dbReference type="GlyGen" id="Q64176">
    <property type="glycosylation" value="3 sites, 1 N-linked glycan (1 site)"/>
</dbReference>
<dbReference type="iPTMnet" id="Q64176"/>
<dbReference type="PhosphoSitePlus" id="Q64176"/>
<dbReference type="SwissPalm" id="Q64176"/>
<dbReference type="jPOST" id="Q64176"/>
<dbReference type="PaxDb" id="10090-ENSMUSP00000034173"/>
<dbReference type="ProteomicsDB" id="275784"/>
<dbReference type="DNASU" id="13897"/>
<dbReference type="Ensembl" id="ENSMUST00000034173.14">
    <property type="protein sequence ID" value="ENSMUSP00000034173.8"/>
    <property type="gene ID" value="ENSMUSG00000061959.14"/>
</dbReference>
<dbReference type="GeneID" id="13897"/>
<dbReference type="KEGG" id="mmu:13897"/>
<dbReference type="UCSC" id="uc009muo.2">
    <property type="organism name" value="mouse"/>
</dbReference>
<dbReference type="AGR" id="MGI:95432"/>
<dbReference type="CTD" id="13897"/>
<dbReference type="MGI" id="MGI:95432">
    <property type="gene designation" value="Ces1e"/>
</dbReference>
<dbReference type="VEuPathDB" id="HostDB:ENSMUSG00000061959"/>
<dbReference type="eggNOG" id="KOG1516">
    <property type="taxonomic scope" value="Eukaryota"/>
</dbReference>
<dbReference type="GeneTree" id="ENSGT00940000158564"/>
<dbReference type="InParanoid" id="Q64176"/>
<dbReference type="OMA" id="DEHSWGN"/>
<dbReference type="OrthoDB" id="3200163at2759"/>
<dbReference type="PhylomeDB" id="Q64176"/>
<dbReference type="TreeFam" id="TF315470"/>
<dbReference type="BRENDA" id="3.1.1.1">
    <property type="organism ID" value="3474"/>
</dbReference>
<dbReference type="BioGRID-ORCS" id="13897">
    <property type="hits" value="2 hits in 78 CRISPR screens"/>
</dbReference>
<dbReference type="ChiTaRS" id="Ces1e">
    <property type="organism name" value="mouse"/>
</dbReference>
<dbReference type="PRO" id="PR:Q64176"/>
<dbReference type="Proteomes" id="UP000000589">
    <property type="component" value="Chromosome 8"/>
</dbReference>
<dbReference type="RNAct" id="Q64176">
    <property type="molecule type" value="protein"/>
</dbReference>
<dbReference type="Bgee" id="ENSMUSG00000061959">
    <property type="expression patterns" value="Expressed in left lobe of liver and 63 other cell types or tissues"/>
</dbReference>
<dbReference type="ExpressionAtlas" id="Q64176">
    <property type="expression patterns" value="baseline and differential"/>
</dbReference>
<dbReference type="GO" id="GO:0005788">
    <property type="term" value="C:endoplasmic reticulum lumen"/>
    <property type="evidence" value="ECO:0007669"/>
    <property type="project" value="UniProtKB-SubCell"/>
</dbReference>
<dbReference type="GO" id="GO:0016020">
    <property type="term" value="C:membrane"/>
    <property type="evidence" value="ECO:0007669"/>
    <property type="project" value="UniProtKB-KW"/>
</dbReference>
<dbReference type="GO" id="GO:0047376">
    <property type="term" value="F:all-trans-retinyl-palmitate hydrolase, all-trans-retinol forming activity"/>
    <property type="evidence" value="ECO:0007669"/>
    <property type="project" value="RHEA"/>
</dbReference>
<dbReference type="GO" id="GO:0106435">
    <property type="term" value="F:carboxylesterase activity"/>
    <property type="evidence" value="ECO:0000314"/>
    <property type="project" value="MGI"/>
</dbReference>
<dbReference type="CDD" id="cd00312">
    <property type="entry name" value="Esterase_lipase"/>
    <property type="match status" value="1"/>
</dbReference>
<dbReference type="FunFam" id="3.40.50.1820:FF:000011">
    <property type="entry name" value="Carboxylic ester hydrolase"/>
    <property type="match status" value="1"/>
</dbReference>
<dbReference type="Gene3D" id="3.40.50.1820">
    <property type="entry name" value="alpha/beta hydrolase"/>
    <property type="match status" value="1"/>
</dbReference>
<dbReference type="InterPro" id="IPR029058">
    <property type="entry name" value="AB_hydrolase_fold"/>
</dbReference>
<dbReference type="InterPro" id="IPR002018">
    <property type="entry name" value="CarbesteraseB"/>
</dbReference>
<dbReference type="InterPro" id="IPR019826">
    <property type="entry name" value="Carboxylesterase_B_AS"/>
</dbReference>
<dbReference type="InterPro" id="IPR019819">
    <property type="entry name" value="Carboxylesterase_B_CS"/>
</dbReference>
<dbReference type="InterPro" id="IPR050309">
    <property type="entry name" value="Type-B_Carboxylest/Lipase"/>
</dbReference>
<dbReference type="PANTHER" id="PTHR11559">
    <property type="entry name" value="CARBOXYLESTERASE"/>
    <property type="match status" value="1"/>
</dbReference>
<dbReference type="Pfam" id="PF00135">
    <property type="entry name" value="COesterase"/>
    <property type="match status" value="1"/>
</dbReference>
<dbReference type="SUPFAM" id="SSF53474">
    <property type="entry name" value="alpha/beta-Hydrolases"/>
    <property type="match status" value="1"/>
</dbReference>
<dbReference type="PROSITE" id="PS00122">
    <property type="entry name" value="CARBOXYLESTERASE_B_1"/>
    <property type="match status" value="1"/>
</dbReference>
<dbReference type="PROSITE" id="PS00941">
    <property type="entry name" value="CARBOXYLESTERASE_B_2"/>
    <property type="match status" value="1"/>
</dbReference>
<reference key="1">
    <citation type="journal article" date="1991" name="Genomics">
        <title>Characterization and functional expression of a cDNA encoding egasyn (esterase-22): the endoplasmic reticulum-targeting protein of beta-glucuronidase.</title>
        <authorList>
            <person name="Ovnic M."/>
            <person name="Swank R.T."/>
            <person name="Fletcher C."/>
            <person name="Zhen L."/>
            <person name="Novak E.K."/>
            <person name="Baumann H."/>
            <person name="Heintz N."/>
            <person name="Ganschow R.E."/>
        </authorList>
    </citation>
    <scope>NUCLEOTIDE SEQUENCE [MRNA]</scope>
    <scope>PARTIAL PROTEIN SEQUENCE</scope>
</reference>
<reference key="2">
    <citation type="journal article" date="2004" name="Genome Res.">
        <title>The status, quality, and expansion of the NIH full-length cDNA project: the Mammalian Gene Collection (MGC).</title>
        <authorList>
            <consortium name="The MGC Project Team"/>
        </authorList>
    </citation>
    <scope>NUCLEOTIDE SEQUENCE [LARGE SCALE MRNA]</scope>
    <source>
        <strain>FVB/N</strain>
        <tissue>Liver</tissue>
    </source>
</reference>
<reference key="3">
    <citation type="journal article" date="2010" name="Cell">
        <title>A tissue-specific atlas of mouse protein phosphorylation and expression.</title>
        <authorList>
            <person name="Huttlin E.L."/>
            <person name="Jedrychowski M.P."/>
            <person name="Elias J.E."/>
            <person name="Goswami T."/>
            <person name="Rad R."/>
            <person name="Beausoleil S.A."/>
            <person name="Villen J."/>
            <person name="Haas W."/>
            <person name="Sowa M.E."/>
            <person name="Gygi S.P."/>
        </authorList>
    </citation>
    <scope>IDENTIFICATION BY MASS SPECTROMETRY [LARGE SCALE ANALYSIS]</scope>
    <source>
        <tissue>Liver</tissue>
        <tissue>Pancreas</tissue>
    </source>
</reference>
<name>EST1E_MOUSE</name>
<gene>
    <name evidence="7" type="primary">Ces1e</name>
    <name type="synonym">Es22</name>
</gene>
<proteinExistence type="evidence at protein level"/>
<keyword id="KW-0903">Direct protein sequencing</keyword>
<keyword id="KW-1015">Disulfide bond</keyword>
<keyword id="KW-0256">Endoplasmic reticulum</keyword>
<keyword id="KW-0325">Glycoprotein</keyword>
<keyword id="KW-0378">Hydrolase</keyword>
<keyword id="KW-0472">Membrane</keyword>
<keyword id="KW-0492">Microsome</keyword>
<keyword id="KW-1185">Reference proteome</keyword>
<keyword id="KW-0719">Serine esterase</keyword>
<keyword id="KW-0732">Signal</keyword>
<organism>
    <name type="scientific">Mus musculus</name>
    <name type="common">Mouse</name>
    <dbReference type="NCBI Taxonomy" id="10090"/>
    <lineage>
        <taxon>Eukaryota</taxon>
        <taxon>Metazoa</taxon>
        <taxon>Chordata</taxon>
        <taxon>Craniata</taxon>
        <taxon>Vertebrata</taxon>
        <taxon>Euteleostomi</taxon>
        <taxon>Mammalia</taxon>
        <taxon>Eutheria</taxon>
        <taxon>Euarchontoglires</taxon>
        <taxon>Glires</taxon>
        <taxon>Rodentia</taxon>
        <taxon>Myomorpha</taxon>
        <taxon>Muroidea</taxon>
        <taxon>Muridae</taxon>
        <taxon>Murinae</taxon>
        <taxon>Mus</taxon>
        <taxon>Mus</taxon>
    </lineage>
</organism>
<comment type="function">
    <text evidence="3">Involved in the detoxification of xenobiotics and in the activation of ester and amide prodrugs. Hydrolyzes retinyl esters.</text>
</comment>
<comment type="catalytic activity">
    <reaction evidence="5">
        <text>a carboxylic ester + H2O = an alcohol + a carboxylate + H(+)</text>
        <dbReference type="Rhea" id="RHEA:21164"/>
        <dbReference type="ChEBI" id="CHEBI:15377"/>
        <dbReference type="ChEBI" id="CHEBI:15378"/>
        <dbReference type="ChEBI" id="CHEBI:29067"/>
        <dbReference type="ChEBI" id="CHEBI:30879"/>
        <dbReference type="ChEBI" id="CHEBI:33308"/>
        <dbReference type="EC" id="3.1.1.1"/>
    </reaction>
</comment>
<comment type="catalytic activity">
    <reaction evidence="3">
        <text>all-trans-retinyl hexadecanoate + H2O = all-trans-retinol + hexadecanoate + H(+)</text>
        <dbReference type="Rhea" id="RHEA:13933"/>
        <dbReference type="ChEBI" id="CHEBI:7896"/>
        <dbReference type="ChEBI" id="CHEBI:15377"/>
        <dbReference type="ChEBI" id="CHEBI:15378"/>
        <dbReference type="ChEBI" id="CHEBI:17336"/>
        <dbReference type="ChEBI" id="CHEBI:17616"/>
    </reaction>
    <physiologicalReaction direction="left-to-right" evidence="3">
        <dbReference type="Rhea" id="RHEA:13934"/>
    </physiologicalReaction>
</comment>
<comment type="subcellular location">
    <subcellularLocation>
        <location evidence="3">Endoplasmic reticulum lumen</location>
    </subcellularLocation>
    <subcellularLocation>
        <location evidence="3">Microsome membrane</location>
    </subcellularLocation>
</comment>
<comment type="similarity">
    <text evidence="6">Belongs to the type-B carboxylesterase/lipase family.</text>
</comment>
<evidence type="ECO:0000250" key="1"/>
<evidence type="ECO:0000250" key="2">
    <source>
        <dbReference type="UniProtKB" id="P23141"/>
    </source>
</evidence>
<evidence type="ECO:0000250" key="3">
    <source>
        <dbReference type="UniProtKB" id="Q63108"/>
    </source>
</evidence>
<evidence type="ECO:0000255" key="4"/>
<evidence type="ECO:0000255" key="5">
    <source>
        <dbReference type="PROSITE-ProRule" id="PRU10039"/>
    </source>
</evidence>
<evidence type="ECO:0000305" key="6"/>
<evidence type="ECO:0000312" key="7">
    <source>
        <dbReference type="MGI" id="MGI:95432"/>
    </source>
</evidence>
<accession>Q64176</accession>
<feature type="signal peptide" evidence="1">
    <location>
        <begin position="1"/>
        <end position="19"/>
    </location>
</feature>
<feature type="chain" id="PRO_0000008576" description="Carboxylesterase 1E">
    <location>
        <begin position="20"/>
        <end position="562"/>
    </location>
</feature>
<feature type="short sequence motif" description="Prevents secretion from ER" evidence="4">
    <location>
        <begin position="559"/>
        <end position="562"/>
    </location>
</feature>
<feature type="active site" description="Acyl-ester intermediate" evidence="5">
    <location>
        <position position="222"/>
    </location>
</feature>
<feature type="active site" description="Charge relay system" evidence="2">
    <location>
        <position position="354"/>
    </location>
</feature>
<feature type="active site" description="Charge relay system" evidence="2">
    <location>
        <position position="467"/>
    </location>
</feature>
<feature type="glycosylation site" description="N-linked (GlcNAc...) asparagine" evidence="4">
    <location>
        <position position="80"/>
    </location>
</feature>
<feature type="glycosylation site" description="N-linked (GlcNAc...) asparagine" evidence="4">
    <location>
        <position position="276"/>
    </location>
</feature>
<feature type="glycosylation site" description="N-linked (GlcNAc...) asparagine" evidence="4">
    <location>
        <position position="490"/>
    </location>
</feature>
<feature type="disulfide bond" evidence="2">
    <location>
        <begin position="88"/>
        <end position="117"/>
    </location>
</feature>
<feature type="disulfide bond" evidence="2">
    <location>
        <begin position="274"/>
        <end position="285"/>
    </location>
</feature>
<protein>
    <recommendedName>
        <fullName evidence="6">Carboxylesterase 1E</fullName>
        <ecNumber evidence="5">3.1.1.1</ecNumber>
    </recommendedName>
    <alternativeName>
        <fullName>Egasyn</fullName>
    </alternativeName>
    <alternativeName>
        <fullName>Liver carboxylesterase 22</fullName>
        <shortName>Es-22</shortName>
        <shortName>Esterase-22</shortName>
    </alternativeName>
</protein>